<organism>
    <name type="scientific">Shewanella sediminis (strain HAW-EB3)</name>
    <dbReference type="NCBI Taxonomy" id="425104"/>
    <lineage>
        <taxon>Bacteria</taxon>
        <taxon>Pseudomonadati</taxon>
        <taxon>Pseudomonadota</taxon>
        <taxon>Gammaproteobacteria</taxon>
        <taxon>Alteromonadales</taxon>
        <taxon>Shewanellaceae</taxon>
        <taxon>Shewanella</taxon>
    </lineage>
</organism>
<reference key="1">
    <citation type="submission" date="2007-08" db="EMBL/GenBank/DDBJ databases">
        <title>Complete sequence of Shewanella sediminis HAW-EB3.</title>
        <authorList>
            <consortium name="US DOE Joint Genome Institute"/>
            <person name="Copeland A."/>
            <person name="Lucas S."/>
            <person name="Lapidus A."/>
            <person name="Barry K."/>
            <person name="Glavina del Rio T."/>
            <person name="Dalin E."/>
            <person name="Tice H."/>
            <person name="Pitluck S."/>
            <person name="Chertkov O."/>
            <person name="Brettin T."/>
            <person name="Bruce D."/>
            <person name="Detter J.C."/>
            <person name="Han C."/>
            <person name="Schmutz J."/>
            <person name="Larimer F."/>
            <person name="Land M."/>
            <person name="Hauser L."/>
            <person name="Kyrpides N."/>
            <person name="Kim E."/>
            <person name="Zhao J.-S."/>
            <person name="Richardson P."/>
        </authorList>
    </citation>
    <scope>NUCLEOTIDE SEQUENCE [LARGE SCALE GENOMIC DNA]</scope>
    <source>
        <strain>HAW-EB3</strain>
    </source>
</reference>
<keyword id="KW-1185">Reference proteome</keyword>
<sequence>MSEQAKVGLGLRREMLDEFCDSTPDAIDFFEVAPENWMTLGGKFGRQFKQLTERKPFFCHGLSLSIGGPSPLDIQFVKDIKAFMDLHNISTYSEHLSYCSGTGHMYDLMPIPFTQEAVMHVVKRVKQVEDILERPLILENVSFYAAPGAEMTEFEFVNAVLSEADCRLLLDVNNIYVNSVNHHYDASQFLGSMPTERIAYLHIAGHYEEAEDLIVDTHGADIISPVWQLLRECYEIHGVHPTLLERDFNIPPTSELLNEIDQIHEYQHAVPSLLSRSA</sequence>
<dbReference type="EMBL" id="CP000821">
    <property type="protein sequence ID" value="ABV37464.1"/>
    <property type="molecule type" value="Genomic_DNA"/>
</dbReference>
<dbReference type="RefSeq" id="WP_012143194.1">
    <property type="nucleotide sequence ID" value="NC_009831.1"/>
</dbReference>
<dbReference type="SMR" id="A8FX91"/>
<dbReference type="STRING" id="425104.Ssed_2857"/>
<dbReference type="KEGG" id="sse:Ssed_2857"/>
<dbReference type="eggNOG" id="COG3220">
    <property type="taxonomic scope" value="Bacteria"/>
</dbReference>
<dbReference type="HOGENOM" id="CLU_064263_0_0_6"/>
<dbReference type="OrthoDB" id="9763101at2"/>
<dbReference type="Proteomes" id="UP000002015">
    <property type="component" value="Chromosome"/>
</dbReference>
<dbReference type="Gene3D" id="3.20.20.150">
    <property type="entry name" value="Divalent-metal-dependent TIM barrel enzymes"/>
    <property type="match status" value="1"/>
</dbReference>
<dbReference type="HAMAP" id="MF_00697">
    <property type="entry name" value="UPF0276"/>
    <property type="match status" value="1"/>
</dbReference>
<dbReference type="InterPro" id="IPR007801">
    <property type="entry name" value="MbnB/TglH/ChrH"/>
</dbReference>
<dbReference type="InterPro" id="IPR036237">
    <property type="entry name" value="Xyl_isomerase-like_sf"/>
</dbReference>
<dbReference type="NCBIfam" id="NF003818">
    <property type="entry name" value="PRK05409.1"/>
    <property type="match status" value="1"/>
</dbReference>
<dbReference type="PANTHER" id="PTHR42194">
    <property type="entry name" value="UPF0276 PROTEIN HI_1600"/>
    <property type="match status" value="1"/>
</dbReference>
<dbReference type="PANTHER" id="PTHR42194:SF1">
    <property type="entry name" value="UPF0276 PROTEIN HI_1600"/>
    <property type="match status" value="1"/>
</dbReference>
<dbReference type="Pfam" id="PF05114">
    <property type="entry name" value="MbnB_TglH_ChrH"/>
    <property type="match status" value="1"/>
</dbReference>
<dbReference type="SUPFAM" id="SSF51658">
    <property type="entry name" value="Xylose isomerase-like"/>
    <property type="match status" value="1"/>
</dbReference>
<protein>
    <recommendedName>
        <fullName evidence="1">UPF0276 protein Ssed_2857</fullName>
    </recommendedName>
</protein>
<proteinExistence type="inferred from homology"/>
<accession>A8FX91</accession>
<evidence type="ECO:0000255" key="1">
    <source>
        <dbReference type="HAMAP-Rule" id="MF_00697"/>
    </source>
</evidence>
<name>Y2857_SHESH</name>
<feature type="chain" id="PRO_1000132339" description="UPF0276 protein Ssed_2857">
    <location>
        <begin position="1"/>
        <end position="278"/>
    </location>
</feature>
<comment type="similarity">
    <text evidence="1">Belongs to the UPF0276 family.</text>
</comment>
<gene>
    <name type="ordered locus">Ssed_2857</name>
</gene>